<sequence length="311" mass="35208">MEFHHVSVLLNECIENLNIKPDGVYVDCTMGGAGHSKEIVKKLSDKGLFIGFDQDKNAISTAKERLSEYESRVKFVHSNFENIKEELEKIGVYKIDGVLADLGVSSHQLDEADRGFSYMQDAPLDMRMDVRCEFSAYDVVNTYTEDELTKIIKDYGEDNWAKRIAKFIVEERANKPIETTGELVDVIKKAIPKKARIVGPHPAKRTFQAIRIEVNNELGVITKMINDASSIMNEGGRICIITFHSLEDRIVKNAFKHLASDCICPQHLPICQCDKESEVKIITRKPILPSEEEIEVNPRSRSAKLRVAEKI</sequence>
<gene>
    <name evidence="1" type="primary">rsmH</name>
    <name type="synonym">mraW</name>
    <name type="ordered locus">CD630_26580</name>
</gene>
<accession>Q182Z2</accession>
<keyword id="KW-0963">Cytoplasm</keyword>
<keyword id="KW-0489">Methyltransferase</keyword>
<keyword id="KW-1185">Reference proteome</keyword>
<keyword id="KW-0698">rRNA processing</keyword>
<keyword id="KW-0949">S-adenosyl-L-methionine</keyword>
<keyword id="KW-0808">Transferase</keyword>
<protein>
    <recommendedName>
        <fullName evidence="1">Ribosomal RNA small subunit methyltransferase H</fullName>
        <ecNumber evidence="1">2.1.1.199</ecNumber>
    </recommendedName>
    <alternativeName>
        <fullName evidence="1">16S rRNA m(4)C1402 methyltransferase</fullName>
    </alternativeName>
    <alternativeName>
        <fullName evidence="1">rRNA (cytosine-N(4)-)-methyltransferase RsmH</fullName>
    </alternativeName>
</protein>
<dbReference type="EC" id="2.1.1.199" evidence="1"/>
<dbReference type="EMBL" id="AM180355">
    <property type="protein sequence ID" value="CAJ69544.1"/>
    <property type="molecule type" value="Genomic_DNA"/>
</dbReference>
<dbReference type="RefSeq" id="WP_011861627.1">
    <property type="nucleotide sequence ID" value="NC_009089.1"/>
</dbReference>
<dbReference type="RefSeq" id="YP_001089169.1">
    <property type="nucleotide sequence ID" value="NC_009089.1"/>
</dbReference>
<dbReference type="SMR" id="Q182Z2"/>
<dbReference type="STRING" id="272563.CD630_26580"/>
<dbReference type="EnsemblBacteria" id="CAJ69544">
    <property type="protein sequence ID" value="CAJ69544"/>
    <property type="gene ID" value="CD630_26580"/>
</dbReference>
<dbReference type="KEGG" id="cdf:CD630_26580"/>
<dbReference type="KEGG" id="pdc:CDIF630_02912"/>
<dbReference type="PATRIC" id="fig|272563.120.peg.2801"/>
<dbReference type="eggNOG" id="COG0275">
    <property type="taxonomic scope" value="Bacteria"/>
</dbReference>
<dbReference type="OrthoDB" id="9806637at2"/>
<dbReference type="PhylomeDB" id="Q182Z2"/>
<dbReference type="BioCyc" id="PDIF272563:G12WB-2809-MONOMER"/>
<dbReference type="Proteomes" id="UP000001978">
    <property type="component" value="Chromosome"/>
</dbReference>
<dbReference type="GO" id="GO:0005737">
    <property type="term" value="C:cytoplasm"/>
    <property type="evidence" value="ECO:0007669"/>
    <property type="project" value="UniProtKB-SubCell"/>
</dbReference>
<dbReference type="GO" id="GO:0071424">
    <property type="term" value="F:rRNA (cytosine-N4-)-methyltransferase activity"/>
    <property type="evidence" value="ECO:0007669"/>
    <property type="project" value="UniProtKB-UniRule"/>
</dbReference>
<dbReference type="GO" id="GO:0070475">
    <property type="term" value="P:rRNA base methylation"/>
    <property type="evidence" value="ECO:0007669"/>
    <property type="project" value="UniProtKB-UniRule"/>
</dbReference>
<dbReference type="FunFam" id="1.10.150.170:FF:000001">
    <property type="entry name" value="Ribosomal RNA small subunit methyltransferase H"/>
    <property type="match status" value="1"/>
</dbReference>
<dbReference type="Gene3D" id="1.10.150.170">
    <property type="entry name" value="Putative methyltransferase TM0872, insert domain"/>
    <property type="match status" value="1"/>
</dbReference>
<dbReference type="Gene3D" id="3.40.50.150">
    <property type="entry name" value="Vaccinia Virus protein VP39"/>
    <property type="match status" value="1"/>
</dbReference>
<dbReference type="HAMAP" id="MF_01007">
    <property type="entry name" value="16SrRNA_methyltr_H"/>
    <property type="match status" value="1"/>
</dbReference>
<dbReference type="InterPro" id="IPR002903">
    <property type="entry name" value="RsmH"/>
</dbReference>
<dbReference type="InterPro" id="IPR023397">
    <property type="entry name" value="SAM-dep_MeTrfase_MraW_recog"/>
</dbReference>
<dbReference type="InterPro" id="IPR029063">
    <property type="entry name" value="SAM-dependent_MTases_sf"/>
</dbReference>
<dbReference type="NCBIfam" id="TIGR00006">
    <property type="entry name" value="16S rRNA (cytosine(1402)-N(4))-methyltransferase RsmH"/>
    <property type="match status" value="1"/>
</dbReference>
<dbReference type="PANTHER" id="PTHR11265:SF0">
    <property type="entry name" value="12S RRNA N4-METHYLCYTIDINE METHYLTRANSFERASE"/>
    <property type="match status" value="1"/>
</dbReference>
<dbReference type="PANTHER" id="PTHR11265">
    <property type="entry name" value="S-ADENOSYL-METHYLTRANSFERASE MRAW"/>
    <property type="match status" value="1"/>
</dbReference>
<dbReference type="Pfam" id="PF01795">
    <property type="entry name" value="Methyltransf_5"/>
    <property type="match status" value="1"/>
</dbReference>
<dbReference type="PIRSF" id="PIRSF004486">
    <property type="entry name" value="MraW"/>
    <property type="match status" value="1"/>
</dbReference>
<dbReference type="SUPFAM" id="SSF81799">
    <property type="entry name" value="Putative methyltransferase TM0872, insert domain"/>
    <property type="match status" value="1"/>
</dbReference>
<dbReference type="SUPFAM" id="SSF53335">
    <property type="entry name" value="S-adenosyl-L-methionine-dependent methyltransferases"/>
    <property type="match status" value="1"/>
</dbReference>
<feature type="chain" id="PRO_0000386820" description="Ribosomal RNA small subunit methyltransferase H">
    <location>
        <begin position="1"/>
        <end position="311"/>
    </location>
</feature>
<feature type="binding site" evidence="1">
    <location>
        <begin position="33"/>
        <end position="35"/>
    </location>
    <ligand>
        <name>S-adenosyl-L-methionine</name>
        <dbReference type="ChEBI" id="CHEBI:59789"/>
    </ligand>
</feature>
<feature type="binding site" evidence="1">
    <location>
        <position position="53"/>
    </location>
    <ligand>
        <name>S-adenosyl-L-methionine</name>
        <dbReference type="ChEBI" id="CHEBI:59789"/>
    </ligand>
</feature>
<feature type="binding site" evidence="1">
    <location>
        <position position="80"/>
    </location>
    <ligand>
        <name>S-adenosyl-L-methionine</name>
        <dbReference type="ChEBI" id="CHEBI:59789"/>
    </ligand>
</feature>
<feature type="binding site" evidence="1">
    <location>
        <position position="101"/>
    </location>
    <ligand>
        <name>S-adenosyl-L-methionine</name>
        <dbReference type="ChEBI" id="CHEBI:59789"/>
    </ligand>
</feature>
<feature type="binding site" evidence="1">
    <location>
        <position position="108"/>
    </location>
    <ligand>
        <name>S-adenosyl-L-methionine</name>
        <dbReference type="ChEBI" id="CHEBI:59789"/>
    </ligand>
</feature>
<proteinExistence type="inferred from homology"/>
<name>RSMH_CLOD6</name>
<organism>
    <name type="scientific">Clostridioides difficile (strain 630)</name>
    <name type="common">Peptoclostridium difficile</name>
    <dbReference type="NCBI Taxonomy" id="272563"/>
    <lineage>
        <taxon>Bacteria</taxon>
        <taxon>Bacillati</taxon>
        <taxon>Bacillota</taxon>
        <taxon>Clostridia</taxon>
        <taxon>Peptostreptococcales</taxon>
        <taxon>Peptostreptococcaceae</taxon>
        <taxon>Clostridioides</taxon>
    </lineage>
</organism>
<comment type="function">
    <text evidence="1">Specifically methylates the N4 position of cytidine in position 1402 (C1402) of 16S rRNA.</text>
</comment>
<comment type="catalytic activity">
    <reaction evidence="1">
        <text>cytidine(1402) in 16S rRNA + S-adenosyl-L-methionine = N(4)-methylcytidine(1402) in 16S rRNA + S-adenosyl-L-homocysteine + H(+)</text>
        <dbReference type="Rhea" id="RHEA:42928"/>
        <dbReference type="Rhea" id="RHEA-COMP:10286"/>
        <dbReference type="Rhea" id="RHEA-COMP:10287"/>
        <dbReference type="ChEBI" id="CHEBI:15378"/>
        <dbReference type="ChEBI" id="CHEBI:57856"/>
        <dbReference type="ChEBI" id="CHEBI:59789"/>
        <dbReference type="ChEBI" id="CHEBI:74506"/>
        <dbReference type="ChEBI" id="CHEBI:82748"/>
        <dbReference type="EC" id="2.1.1.199"/>
    </reaction>
</comment>
<comment type="subcellular location">
    <subcellularLocation>
        <location evidence="1">Cytoplasm</location>
    </subcellularLocation>
</comment>
<comment type="similarity">
    <text evidence="1">Belongs to the methyltransferase superfamily. RsmH family.</text>
</comment>
<evidence type="ECO:0000255" key="1">
    <source>
        <dbReference type="HAMAP-Rule" id="MF_01007"/>
    </source>
</evidence>
<reference key="1">
    <citation type="journal article" date="2006" name="Nat. Genet.">
        <title>The multidrug-resistant human pathogen Clostridium difficile has a highly mobile, mosaic genome.</title>
        <authorList>
            <person name="Sebaihia M."/>
            <person name="Wren B.W."/>
            <person name="Mullany P."/>
            <person name="Fairweather N.F."/>
            <person name="Minton N."/>
            <person name="Stabler R."/>
            <person name="Thomson N.R."/>
            <person name="Roberts A.P."/>
            <person name="Cerdeno-Tarraga A.M."/>
            <person name="Wang H."/>
            <person name="Holden M.T.G."/>
            <person name="Wright A."/>
            <person name="Churcher C."/>
            <person name="Quail M.A."/>
            <person name="Baker S."/>
            <person name="Bason N."/>
            <person name="Brooks K."/>
            <person name="Chillingworth T."/>
            <person name="Cronin A."/>
            <person name="Davis P."/>
            <person name="Dowd L."/>
            <person name="Fraser A."/>
            <person name="Feltwell T."/>
            <person name="Hance Z."/>
            <person name="Holroyd S."/>
            <person name="Jagels K."/>
            <person name="Moule S."/>
            <person name="Mungall K."/>
            <person name="Price C."/>
            <person name="Rabbinowitsch E."/>
            <person name="Sharp S."/>
            <person name="Simmonds M."/>
            <person name="Stevens K."/>
            <person name="Unwin L."/>
            <person name="Whithead S."/>
            <person name="Dupuy B."/>
            <person name="Dougan G."/>
            <person name="Barrell B."/>
            <person name="Parkhill J."/>
        </authorList>
    </citation>
    <scope>NUCLEOTIDE SEQUENCE [LARGE SCALE GENOMIC DNA]</scope>
    <source>
        <strain>630</strain>
    </source>
</reference>